<feature type="signal peptide" evidence="1">
    <location>
        <begin position="1"/>
        <end position="21"/>
    </location>
</feature>
<feature type="chain" id="PRO_5000278272" description="Tol-Pal system protein TolB" evidence="1">
    <location>
        <begin position="22"/>
        <end position="442"/>
    </location>
</feature>
<keyword id="KW-0131">Cell cycle</keyword>
<keyword id="KW-0132">Cell division</keyword>
<keyword id="KW-0574">Periplasm</keyword>
<keyword id="KW-1185">Reference proteome</keyword>
<keyword id="KW-0732">Signal</keyword>
<name>TOLB_SHESH</name>
<accession>A8FUE5</accession>
<proteinExistence type="inferred from homology"/>
<gene>
    <name evidence="1" type="primary">tolB</name>
    <name type="ordered locus">Ssed_1857</name>
</gene>
<dbReference type="EMBL" id="CP000821">
    <property type="protein sequence ID" value="ABV36468.1"/>
    <property type="molecule type" value="Genomic_DNA"/>
</dbReference>
<dbReference type="RefSeq" id="WP_012142204.1">
    <property type="nucleotide sequence ID" value="NC_009831.1"/>
</dbReference>
<dbReference type="SMR" id="A8FUE5"/>
<dbReference type="STRING" id="425104.Ssed_1857"/>
<dbReference type="KEGG" id="sse:Ssed_1857"/>
<dbReference type="eggNOG" id="COG0823">
    <property type="taxonomic scope" value="Bacteria"/>
</dbReference>
<dbReference type="HOGENOM" id="CLU_047123_0_0_6"/>
<dbReference type="OrthoDB" id="9802240at2"/>
<dbReference type="Proteomes" id="UP000002015">
    <property type="component" value="Chromosome"/>
</dbReference>
<dbReference type="GO" id="GO:0042597">
    <property type="term" value="C:periplasmic space"/>
    <property type="evidence" value="ECO:0007669"/>
    <property type="project" value="UniProtKB-SubCell"/>
</dbReference>
<dbReference type="GO" id="GO:0051301">
    <property type="term" value="P:cell division"/>
    <property type="evidence" value="ECO:0007669"/>
    <property type="project" value="UniProtKB-UniRule"/>
</dbReference>
<dbReference type="GO" id="GO:0017038">
    <property type="term" value="P:protein import"/>
    <property type="evidence" value="ECO:0007669"/>
    <property type="project" value="InterPro"/>
</dbReference>
<dbReference type="Gene3D" id="2.120.10.30">
    <property type="entry name" value="TolB, C-terminal domain"/>
    <property type="match status" value="1"/>
</dbReference>
<dbReference type="Gene3D" id="3.40.50.10070">
    <property type="entry name" value="TolB, N-terminal domain"/>
    <property type="match status" value="1"/>
</dbReference>
<dbReference type="HAMAP" id="MF_00671">
    <property type="entry name" value="TolB"/>
    <property type="match status" value="1"/>
</dbReference>
<dbReference type="InterPro" id="IPR011042">
    <property type="entry name" value="6-blade_b-propeller_TolB-like"/>
</dbReference>
<dbReference type="InterPro" id="IPR011659">
    <property type="entry name" value="PD40"/>
</dbReference>
<dbReference type="InterPro" id="IPR014167">
    <property type="entry name" value="Tol-Pal_TolB"/>
</dbReference>
<dbReference type="InterPro" id="IPR007195">
    <property type="entry name" value="TolB_N"/>
</dbReference>
<dbReference type="NCBIfam" id="TIGR02800">
    <property type="entry name" value="propeller_TolB"/>
    <property type="match status" value="1"/>
</dbReference>
<dbReference type="PANTHER" id="PTHR36842:SF1">
    <property type="entry name" value="PROTEIN TOLB"/>
    <property type="match status" value="1"/>
</dbReference>
<dbReference type="PANTHER" id="PTHR36842">
    <property type="entry name" value="PROTEIN TOLB HOMOLOG"/>
    <property type="match status" value="1"/>
</dbReference>
<dbReference type="Pfam" id="PF07676">
    <property type="entry name" value="PD40"/>
    <property type="match status" value="4"/>
</dbReference>
<dbReference type="Pfam" id="PF04052">
    <property type="entry name" value="TolB_N"/>
    <property type="match status" value="1"/>
</dbReference>
<dbReference type="SUPFAM" id="SSF52964">
    <property type="entry name" value="TolB, N-terminal domain"/>
    <property type="match status" value="1"/>
</dbReference>
<dbReference type="SUPFAM" id="SSF69304">
    <property type="entry name" value="Tricorn protease N-terminal domain"/>
    <property type="match status" value="1"/>
</dbReference>
<organism>
    <name type="scientific">Shewanella sediminis (strain HAW-EB3)</name>
    <dbReference type="NCBI Taxonomy" id="425104"/>
    <lineage>
        <taxon>Bacteria</taxon>
        <taxon>Pseudomonadati</taxon>
        <taxon>Pseudomonadota</taxon>
        <taxon>Gammaproteobacteria</taxon>
        <taxon>Alteromonadales</taxon>
        <taxon>Shewanellaceae</taxon>
        <taxon>Shewanella</taxon>
    </lineage>
</organism>
<evidence type="ECO:0000255" key="1">
    <source>
        <dbReference type="HAMAP-Rule" id="MF_00671"/>
    </source>
</evidence>
<sequence>MKTFGKWLVLGLVILSSPVRAALDIVITEGIDAARPIAVVPFVWQGQGPAPQQISDVVMSDLTRSGTFKTLDELSLPQRNISAISQFQAKDWANVGAEAVVMGAIKPYGEDKYLVSFDLVDLVKAQMQSGTGPQSKQEFLIDSRETVISSAQFRQYGHRISDIIYEKLTGIRGAFLTRIAYVVVKHGEKSPYQLMISDYDGHNEQMLLRSPEPLMSPSWSPDGRQLAYVSFENKKAEIFIQDIYTQSRSKITSFAGINGAPVFSPDGKKLALTLSKDGQPEIYVVDISTKALKRVTNHYAIDTEASWFPDGKSLIFTSERGGRPQIYKVTLASGKVQRMTFEGEWNLGGSILPDGRSMIFVNRTNGKYNIARMDLETRFMQVLTSTRLDESPSVAPNGTMVIYGTTYQGKQVLAAVSTDGRFKARLPTGQGEVKSPSWSPFL</sequence>
<comment type="function">
    <text evidence="1">Part of the Tol-Pal system, which plays a role in outer membrane invagination during cell division and is important for maintaining outer membrane integrity.</text>
</comment>
<comment type="subunit">
    <text evidence="1">The Tol-Pal system is composed of five core proteins: the inner membrane proteins TolA, TolQ and TolR, the periplasmic protein TolB and the outer membrane protein Pal. They form a network linking the inner and outer membranes and the peptidoglycan layer.</text>
</comment>
<comment type="subcellular location">
    <subcellularLocation>
        <location evidence="1">Periplasm</location>
    </subcellularLocation>
</comment>
<comment type="similarity">
    <text evidence="1">Belongs to the TolB family.</text>
</comment>
<reference key="1">
    <citation type="submission" date="2007-08" db="EMBL/GenBank/DDBJ databases">
        <title>Complete sequence of Shewanella sediminis HAW-EB3.</title>
        <authorList>
            <consortium name="US DOE Joint Genome Institute"/>
            <person name="Copeland A."/>
            <person name="Lucas S."/>
            <person name="Lapidus A."/>
            <person name="Barry K."/>
            <person name="Glavina del Rio T."/>
            <person name="Dalin E."/>
            <person name="Tice H."/>
            <person name="Pitluck S."/>
            <person name="Chertkov O."/>
            <person name="Brettin T."/>
            <person name="Bruce D."/>
            <person name="Detter J.C."/>
            <person name="Han C."/>
            <person name="Schmutz J."/>
            <person name="Larimer F."/>
            <person name="Land M."/>
            <person name="Hauser L."/>
            <person name="Kyrpides N."/>
            <person name="Kim E."/>
            <person name="Zhao J.-S."/>
            <person name="Richardson P."/>
        </authorList>
    </citation>
    <scope>NUCLEOTIDE SEQUENCE [LARGE SCALE GENOMIC DNA]</scope>
    <source>
        <strain>HAW-EB3</strain>
    </source>
</reference>
<protein>
    <recommendedName>
        <fullName evidence="1">Tol-Pal system protein TolB</fullName>
    </recommendedName>
</protein>